<protein>
    <recommendedName>
        <fullName evidence="2">D-alanine--D-alanine ligase</fullName>
        <ecNumber evidence="2">6.3.2.4</ecNumber>
    </recommendedName>
    <alternativeName>
        <fullName evidence="2">D-Ala-D-Ala ligase</fullName>
    </alternativeName>
    <alternativeName>
        <fullName evidence="2">D-alanylalanine synthetase</fullName>
    </alternativeName>
</protein>
<gene>
    <name evidence="2" type="primary">ddl</name>
    <name type="ordered locus">Sama_1903</name>
</gene>
<proteinExistence type="inferred from homology"/>
<sequence>MNKYNLVLLCGGGGSEHDISLLSAKYFESCLATLPRFNTLWLELTAEGQFRTREGEIVELTNRREIRFADEAKAPWSVDYVIPCIHGYPGETGDIQSWFNLIRLPYFGCGSEASSNCFNKITAKMWFSALGIPNTPYLYLDEPSNDAIARVEAAFDEWGSVFIKAASQGSSVGCFPAHRREDIPGLVRKAFEYAPFVVVEKTIKARELEVAVYDYQGEIVATRPGEIVCAANTFYSFEEKYDTKSQAVTHVEAPDVDEETVAAIRDYALRAFKGMKLRHLSRIDFFLTEDNQILLNEINTFPGLTQISMFPKMLAHHGHDFATFLEQAILAELEGR</sequence>
<dbReference type="EC" id="6.3.2.4" evidence="2"/>
<dbReference type="EMBL" id="CP000507">
    <property type="protein sequence ID" value="ABM00109.1"/>
    <property type="molecule type" value="Genomic_DNA"/>
</dbReference>
<dbReference type="RefSeq" id="WP_011760016.1">
    <property type="nucleotide sequence ID" value="NC_008700.1"/>
</dbReference>
<dbReference type="SMR" id="A1S6V2"/>
<dbReference type="STRING" id="326297.Sama_1903"/>
<dbReference type="KEGG" id="saz:Sama_1903"/>
<dbReference type="eggNOG" id="COG1181">
    <property type="taxonomic scope" value="Bacteria"/>
</dbReference>
<dbReference type="HOGENOM" id="CLU_039268_0_0_6"/>
<dbReference type="OrthoDB" id="9813261at2"/>
<dbReference type="UniPathway" id="UPA00219"/>
<dbReference type="Proteomes" id="UP000009175">
    <property type="component" value="Chromosome"/>
</dbReference>
<dbReference type="GO" id="GO:0005829">
    <property type="term" value="C:cytosol"/>
    <property type="evidence" value="ECO:0007669"/>
    <property type="project" value="TreeGrafter"/>
</dbReference>
<dbReference type="GO" id="GO:0005524">
    <property type="term" value="F:ATP binding"/>
    <property type="evidence" value="ECO:0007669"/>
    <property type="project" value="UniProtKB-KW"/>
</dbReference>
<dbReference type="GO" id="GO:0008716">
    <property type="term" value="F:D-alanine-D-alanine ligase activity"/>
    <property type="evidence" value="ECO:0007669"/>
    <property type="project" value="UniProtKB-UniRule"/>
</dbReference>
<dbReference type="GO" id="GO:0046872">
    <property type="term" value="F:metal ion binding"/>
    <property type="evidence" value="ECO:0007669"/>
    <property type="project" value="UniProtKB-KW"/>
</dbReference>
<dbReference type="GO" id="GO:0071555">
    <property type="term" value="P:cell wall organization"/>
    <property type="evidence" value="ECO:0007669"/>
    <property type="project" value="UniProtKB-KW"/>
</dbReference>
<dbReference type="GO" id="GO:0009252">
    <property type="term" value="P:peptidoglycan biosynthetic process"/>
    <property type="evidence" value="ECO:0007669"/>
    <property type="project" value="UniProtKB-UniRule"/>
</dbReference>
<dbReference type="GO" id="GO:0008360">
    <property type="term" value="P:regulation of cell shape"/>
    <property type="evidence" value="ECO:0007669"/>
    <property type="project" value="UniProtKB-KW"/>
</dbReference>
<dbReference type="Gene3D" id="3.40.50.20">
    <property type="match status" value="1"/>
</dbReference>
<dbReference type="Gene3D" id="3.30.1490.20">
    <property type="entry name" value="ATP-grasp fold, A domain"/>
    <property type="match status" value="1"/>
</dbReference>
<dbReference type="Gene3D" id="3.30.470.20">
    <property type="entry name" value="ATP-grasp fold, B domain"/>
    <property type="match status" value="1"/>
</dbReference>
<dbReference type="HAMAP" id="MF_00047">
    <property type="entry name" value="Dala_Dala_lig"/>
    <property type="match status" value="1"/>
</dbReference>
<dbReference type="InterPro" id="IPR011761">
    <property type="entry name" value="ATP-grasp"/>
</dbReference>
<dbReference type="InterPro" id="IPR013815">
    <property type="entry name" value="ATP_grasp_subdomain_1"/>
</dbReference>
<dbReference type="InterPro" id="IPR000291">
    <property type="entry name" value="D-Ala_lig_Van_CS"/>
</dbReference>
<dbReference type="InterPro" id="IPR005905">
    <property type="entry name" value="D_ala_D_ala"/>
</dbReference>
<dbReference type="InterPro" id="IPR011095">
    <property type="entry name" value="Dala_Dala_lig_C"/>
</dbReference>
<dbReference type="InterPro" id="IPR011127">
    <property type="entry name" value="Dala_Dala_lig_N"/>
</dbReference>
<dbReference type="InterPro" id="IPR016185">
    <property type="entry name" value="PreATP-grasp_dom_sf"/>
</dbReference>
<dbReference type="NCBIfam" id="TIGR01205">
    <property type="entry name" value="D_ala_D_alaTIGR"/>
    <property type="match status" value="1"/>
</dbReference>
<dbReference type="NCBIfam" id="NF002527">
    <property type="entry name" value="PRK01966.1-3"/>
    <property type="match status" value="1"/>
</dbReference>
<dbReference type="PANTHER" id="PTHR23132">
    <property type="entry name" value="D-ALANINE--D-ALANINE LIGASE"/>
    <property type="match status" value="1"/>
</dbReference>
<dbReference type="PANTHER" id="PTHR23132:SF25">
    <property type="entry name" value="D-ALANINE--D-ALANINE LIGASE A"/>
    <property type="match status" value="1"/>
</dbReference>
<dbReference type="Pfam" id="PF07478">
    <property type="entry name" value="Dala_Dala_lig_C"/>
    <property type="match status" value="1"/>
</dbReference>
<dbReference type="Pfam" id="PF01820">
    <property type="entry name" value="Dala_Dala_lig_N"/>
    <property type="match status" value="1"/>
</dbReference>
<dbReference type="PIRSF" id="PIRSF039102">
    <property type="entry name" value="Ddl/VanB"/>
    <property type="match status" value="1"/>
</dbReference>
<dbReference type="SUPFAM" id="SSF56059">
    <property type="entry name" value="Glutathione synthetase ATP-binding domain-like"/>
    <property type="match status" value="1"/>
</dbReference>
<dbReference type="SUPFAM" id="SSF52440">
    <property type="entry name" value="PreATP-grasp domain"/>
    <property type="match status" value="1"/>
</dbReference>
<dbReference type="PROSITE" id="PS50975">
    <property type="entry name" value="ATP_GRASP"/>
    <property type="match status" value="1"/>
</dbReference>
<dbReference type="PROSITE" id="PS00843">
    <property type="entry name" value="DALA_DALA_LIGASE_1"/>
    <property type="match status" value="1"/>
</dbReference>
<dbReference type="PROSITE" id="PS00844">
    <property type="entry name" value="DALA_DALA_LIGASE_2"/>
    <property type="match status" value="1"/>
</dbReference>
<keyword id="KW-0067">ATP-binding</keyword>
<keyword id="KW-0133">Cell shape</keyword>
<keyword id="KW-0961">Cell wall biogenesis/degradation</keyword>
<keyword id="KW-0963">Cytoplasm</keyword>
<keyword id="KW-0436">Ligase</keyword>
<keyword id="KW-0460">Magnesium</keyword>
<keyword id="KW-0464">Manganese</keyword>
<keyword id="KW-0479">Metal-binding</keyword>
<keyword id="KW-0547">Nucleotide-binding</keyword>
<keyword id="KW-0573">Peptidoglycan synthesis</keyword>
<keyword id="KW-1185">Reference proteome</keyword>
<reference key="1">
    <citation type="submission" date="2006-12" db="EMBL/GenBank/DDBJ databases">
        <title>Complete sequence of Shewanella amazonensis SB2B.</title>
        <authorList>
            <consortium name="US DOE Joint Genome Institute"/>
            <person name="Copeland A."/>
            <person name="Lucas S."/>
            <person name="Lapidus A."/>
            <person name="Barry K."/>
            <person name="Detter J.C."/>
            <person name="Glavina del Rio T."/>
            <person name="Hammon N."/>
            <person name="Israni S."/>
            <person name="Dalin E."/>
            <person name="Tice H."/>
            <person name="Pitluck S."/>
            <person name="Munk A.C."/>
            <person name="Brettin T."/>
            <person name="Bruce D."/>
            <person name="Han C."/>
            <person name="Tapia R."/>
            <person name="Gilna P."/>
            <person name="Schmutz J."/>
            <person name="Larimer F."/>
            <person name="Land M."/>
            <person name="Hauser L."/>
            <person name="Kyrpides N."/>
            <person name="Mikhailova N."/>
            <person name="Fredrickson J."/>
            <person name="Richardson P."/>
        </authorList>
    </citation>
    <scope>NUCLEOTIDE SEQUENCE [LARGE SCALE GENOMIC DNA]</scope>
    <source>
        <strain>ATCC BAA-1098 / SB2B</strain>
    </source>
</reference>
<comment type="function">
    <text evidence="2">Cell wall formation.</text>
</comment>
<comment type="catalytic activity">
    <reaction evidence="2">
        <text>2 D-alanine + ATP = D-alanyl-D-alanine + ADP + phosphate + H(+)</text>
        <dbReference type="Rhea" id="RHEA:11224"/>
        <dbReference type="ChEBI" id="CHEBI:15378"/>
        <dbReference type="ChEBI" id="CHEBI:30616"/>
        <dbReference type="ChEBI" id="CHEBI:43474"/>
        <dbReference type="ChEBI" id="CHEBI:57416"/>
        <dbReference type="ChEBI" id="CHEBI:57822"/>
        <dbReference type="ChEBI" id="CHEBI:456216"/>
        <dbReference type="EC" id="6.3.2.4"/>
    </reaction>
</comment>
<comment type="cofactor">
    <cofactor evidence="1">
        <name>Mg(2+)</name>
        <dbReference type="ChEBI" id="CHEBI:18420"/>
    </cofactor>
    <cofactor evidence="1">
        <name>Mn(2+)</name>
        <dbReference type="ChEBI" id="CHEBI:29035"/>
    </cofactor>
    <text evidence="1">Binds 2 magnesium or manganese ions per subunit.</text>
</comment>
<comment type="pathway">
    <text evidence="2">Cell wall biogenesis; peptidoglycan biosynthesis.</text>
</comment>
<comment type="subcellular location">
    <subcellularLocation>
        <location evidence="2">Cytoplasm</location>
    </subcellularLocation>
</comment>
<comment type="similarity">
    <text evidence="2">Belongs to the D-alanine--D-alanine ligase family.</text>
</comment>
<name>DDL_SHEAM</name>
<feature type="chain" id="PRO_1000074783" description="D-alanine--D-alanine ligase">
    <location>
        <begin position="1"/>
        <end position="336"/>
    </location>
</feature>
<feature type="domain" description="ATP-grasp" evidence="2">
    <location>
        <begin position="124"/>
        <end position="330"/>
    </location>
</feature>
<feature type="binding site" evidence="2">
    <location>
        <begin position="154"/>
        <end position="209"/>
    </location>
    <ligand>
        <name>ATP</name>
        <dbReference type="ChEBI" id="CHEBI:30616"/>
    </ligand>
</feature>
<feature type="binding site" evidence="2">
    <location>
        <position position="284"/>
    </location>
    <ligand>
        <name>Mg(2+)</name>
        <dbReference type="ChEBI" id="CHEBI:18420"/>
        <label>1</label>
    </ligand>
</feature>
<feature type="binding site" evidence="2">
    <location>
        <position position="297"/>
    </location>
    <ligand>
        <name>Mg(2+)</name>
        <dbReference type="ChEBI" id="CHEBI:18420"/>
        <label>1</label>
    </ligand>
</feature>
<feature type="binding site" evidence="2">
    <location>
        <position position="297"/>
    </location>
    <ligand>
        <name>Mg(2+)</name>
        <dbReference type="ChEBI" id="CHEBI:18420"/>
        <label>2</label>
    </ligand>
</feature>
<feature type="binding site" evidence="2">
    <location>
        <position position="299"/>
    </location>
    <ligand>
        <name>Mg(2+)</name>
        <dbReference type="ChEBI" id="CHEBI:18420"/>
        <label>2</label>
    </ligand>
</feature>
<organism>
    <name type="scientific">Shewanella amazonensis (strain ATCC BAA-1098 / SB2B)</name>
    <dbReference type="NCBI Taxonomy" id="326297"/>
    <lineage>
        <taxon>Bacteria</taxon>
        <taxon>Pseudomonadati</taxon>
        <taxon>Pseudomonadota</taxon>
        <taxon>Gammaproteobacteria</taxon>
        <taxon>Alteromonadales</taxon>
        <taxon>Shewanellaceae</taxon>
        <taxon>Shewanella</taxon>
    </lineage>
</organism>
<evidence type="ECO:0000250" key="1"/>
<evidence type="ECO:0000255" key="2">
    <source>
        <dbReference type="HAMAP-Rule" id="MF_00047"/>
    </source>
</evidence>
<accession>A1S6V2</accession>